<organism>
    <name type="scientific">Dictyostelium discoideum</name>
    <name type="common">Social amoeba</name>
    <dbReference type="NCBI Taxonomy" id="44689"/>
    <lineage>
        <taxon>Eukaryota</taxon>
        <taxon>Amoebozoa</taxon>
        <taxon>Evosea</taxon>
        <taxon>Eumycetozoa</taxon>
        <taxon>Dictyostelia</taxon>
        <taxon>Dictyosteliales</taxon>
        <taxon>Dictyosteliaceae</taxon>
        <taxon>Dictyostelium</taxon>
    </lineage>
</organism>
<sequence>MKFLSTLILLLSVLALVRGEQYNKFTVDLNGVCTNSGSLDTCTNQCGNAGGSFQISQSGGEYQYEQYATKDCDLMASLTSKFACLADEAPVTLGLGNIKITCQDPSNSASSPLTTAVLFVVAFAAAIALLL</sequence>
<gene>
    <name type="primary">ponM</name>
    <name type="ORF">DDB_G0281989</name>
</gene>
<dbReference type="EMBL" id="AAFI02000044">
    <property type="protein sequence ID" value="EAL66416.1"/>
    <property type="molecule type" value="Genomic_DNA"/>
</dbReference>
<dbReference type="RefSeq" id="XP_640394.1">
    <property type="nucleotide sequence ID" value="XM_635302.1"/>
</dbReference>
<dbReference type="PaxDb" id="44689-DDB0232397"/>
<dbReference type="EnsemblProtists" id="EAL66416">
    <property type="protein sequence ID" value="EAL66416"/>
    <property type="gene ID" value="DDB_G0281989"/>
</dbReference>
<dbReference type="GeneID" id="8623349"/>
<dbReference type="KEGG" id="ddi:DDB_G0281989"/>
<dbReference type="dictyBase" id="DDB_G0281989">
    <property type="gene designation" value="ponM"/>
</dbReference>
<dbReference type="VEuPathDB" id="AmoebaDB:DDB_G0281989"/>
<dbReference type="HOGENOM" id="CLU_1931476_0_0_1"/>
<dbReference type="InParanoid" id="Q54T57"/>
<dbReference type="PRO" id="PR:Q54T57"/>
<dbReference type="Proteomes" id="UP000002195">
    <property type="component" value="Chromosome 3"/>
</dbReference>
<dbReference type="GO" id="GO:0005886">
    <property type="term" value="C:plasma membrane"/>
    <property type="evidence" value="ECO:0007669"/>
    <property type="project" value="UniProtKB-SubCell"/>
</dbReference>
<dbReference type="GO" id="GO:0098552">
    <property type="term" value="C:side of membrane"/>
    <property type="evidence" value="ECO:0007669"/>
    <property type="project" value="UniProtKB-KW"/>
</dbReference>
<dbReference type="GO" id="GO:0003779">
    <property type="term" value="F:actin binding"/>
    <property type="evidence" value="ECO:0007669"/>
    <property type="project" value="UniProtKB-KW"/>
</dbReference>
<protein>
    <recommendedName>
        <fullName>Ponticulin-like protein M</fullName>
    </recommendedName>
</protein>
<reference key="1">
    <citation type="journal article" date="2005" name="Nature">
        <title>The genome of the social amoeba Dictyostelium discoideum.</title>
        <authorList>
            <person name="Eichinger L."/>
            <person name="Pachebat J.A."/>
            <person name="Gloeckner G."/>
            <person name="Rajandream M.A."/>
            <person name="Sucgang R."/>
            <person name="Berriman M."/>
            <person name="Song J."/>
            <person name="Olsen R."/>
            <person name="Szafranski K."/>
            <person name="Xu Q."/>
            <person name="Tunggal B."/>
            <person name="Kummerfeld S."/>
            <person name="Madera M."/>
            <person name="Konfortov B.A."/>
            <person name="Rivero F."/>
            <person name="Bankier A.T."/>
            <person name="Lehmann R."/>
            <person name="Hamlin N."/>
            <person name="Davies R."/>
            <person name="Gaudet P."/>
            <person name="Fey P."/>
            <person name="Pilcher K."/>
            <person name="Chen G."/>
            <person name="Saunders D."/>
            <person name="Sodergren E.J."/>
            <person name="Davis P."/>
            <person name="Kerhornou A."/>
            <person name="Nie X."/>
            <person name="Hall N."/>
            <person name="Anjard C."/>
            <person name="Hemphill L."/>
            <person name="Bason N."/>
            <person name="Farbrother P."/>
            <person name="Desany B."/>
            <person name="Just E."/>
            <person name="Morio T."/>
            <person name="Rost R."/>
            <person name="Churcher C.M."/>
            <person name="Cooper J."/>
            <person name="Haydock S."/>
            <person name="van Driessche N."/>
            <person name="Cronin A."/>
            <person name="Goodhead I."/>
            <person name="Muzny D.M."/>
            <person name="Mourier T."/>
            <person name="Pain A."/>
            <person name="Lu M."/>
            <person name="Harper D."/>
            <person name="Lindsay R."/>
            <person name="Hauser H."/>
            <person name="James K.D."/>
            <person name="Quiles M."/>
            <person name="Madan Babu M."/>
            <person name="Saito T."/>
            <person name="Buchrieser C."/>
            <person name="Wardroper A."/>
            <person name="Felder M."/>
            <person name="Thangavelu M."/>
            <person name="Johnson D."/>
            <person name="Knights A."/>
            <person name="Loulseged H."/>
            <person name="Mungall K.L."/>
            <person name="Oliver K."/>
            <person name="Price C."/>
            <person name="Quail M.A."/>
            <person name="Urushihara H."/>
            <person name="Hernandez J."/>
            <person name="Rabbinowitsch E."/>
            <person name="Steffen D."/>
            <person name="Sanders M."/>
            <person name="Ma J."/>
            <person name="Kohara Y."/>
            <person name="Sharp S."/>
            <person name="Simmonds M.N."/>
            <person name="Spiegler S."/>
            <person name="Tivey A."/>
            <person name="Sugano S."/>
            <person name="White B."/>
            <person name="Walker D."/>
            <person name="Woodward J.R."/>
            <person name="Winckler T."/>
            <person name="Tanaka Y."/>
            <person name="Shaulsky G."/>
            <person name="Schleicher M."/>
            <person name="Weinstock G.M."/>
            <person name="Rosenthal A."/>
            <person name="Cox E.C."/>
            <person name="Chisholm R.L."/>
            <person name="Gibbs R.A."/>
            <person name="Loomis W.F."/>
            <person name="Platzer M."/>
            <person name="Kay R.R."/>
            <person name="Williams J.G."/>
            <person name="Dear P.H."/>
            <person name="Noegel A.A."/>
            <person name="Barrell B.G."/>
            <person name="Kuspa A."/>
        </authorList>
    </citation>
    <scope>NUCLEOTIDE SEQUENCE [LARGE SCALE GENOMIC DNA]</scope>
    <source>
        <strain>AX4</strain>
    </source>
</reference>
<reference key="2">
    <citation type="journal article" date="2008" name="Langmuir">
        <title>Minimal F-actin cytoskeletal system for planar supported phospholipid bilayers.</title>
        <authorList>
            <person name="Barfoot R.J."/>
            <person name="Sheikh K.H."/>
            <person name="Johnson B.R."/>
            <person name="Colyer J."/>
            <person name="Miles R.E."/>
            <person name="Jeuken L.J."/>
            <person name="Bushby R.J."/>
            <person name="Evans S.D."/>
        </authorList>
    </citation>
    <scope>FUNCTION</scope>
</reference>
<name>PONM_DICDI</name>
<keyword id="KW-0009">Actin-binding</keyword>
<keyword id="KW-1003">Cell membrane</keyword>
<keyword id="KW-0325">Glycoprotein</keyword>
<keyword id="KW-0336">GPI-anchor</keyword>
<keyword id="KW-0449">Lipoprotein</keyword>
<keyword id="KW-0472">Membrane</keyword>
<keyword id="KW-1185">Reference proteome</keyword>
<keyword id="KW-0732">Signal</keyword>
<feature type="signal peptide" evidence="1">
    <location>
        <begin position="1"/>
        <end position="19"/>
    </location>
</feature>
<feature type="chain" id="PRO_0000367841" description="Ponticulin-like protein M">
    <location>
        <begin position="20"/>
        <end position="106"/>
    </location>
</feature>
<feature type="propeptide" id="PRO_0000367842" description="Removed in mature form" evidence="1">
    <location>
        <begin position="107"/>
        <end position="131"/>
    </location>
</feature>
<feature type="lipid moiety-binding region" description="GPI-like-anchor amidated serine" evidence="1">
    <location>
        <position position="106"/>
    </location>
</feature>
<evidence type="ECO:0000255" key="1"/>
<evidence type="ECO:0000269" key="2">
    <source>
    </source>
</evidence>
<evidence type="ECO:0000305" key="3"/>
<proteinExistence type="inferred from homology"/>
<accession>Q54T57</accession>
<comment type="function">
    <text evidence="2">Binds F-actin and nucleates actin assembly.</text>
</comment>
<comment type="subcellular location">
    <subcellularLocation>
        <location evidence="3">Cell membrane</location>
        <topology evidence="3">Lipid-anchor</topology>
        <topology evidence="3">GPI-anchor</topology>
    </subcellularLocation>
</comment>
<comment type="PTM">
    <text>The GPI-like-anchor contains a phosphoceramide group, rather than a phosphatidyl group.</text>
</comment>
<comment type="similarity">
    <text evidence="3">Belongs to the ponticulin family.</text>
</comment>
<comment type="caution">
    <text evidence="3">The Dictyosteliida are known to produce a glycosylsphingolipidinositol anchor (GPI-like-anchor). It has not been established whether Dictyosteliida make a glycosylphosphatidylinositol anchor (GPI-anchor) also, and whether their GPI-like-anchor modifications can be interconverted with GPI-anchor modifications in a resculpting process. It has not been established that the GPI-like-anchor modification in Dictyosteliida utilizes the same sequence motif.</text>
</comment>